<name>PANB_ECOL5</name>
<accession>Q0TLJ8</accession>
<reference key="1">
    <citation type="journal article" date="2006" name="Mol. Microbiol.">
        <title>Role of pathogenicity island-associated integrases in the genome plasticity of uropathogenic Escherichia coli strain 536.</title>
        <authorList>
            <person name="Hochhut B."/>
            <person name="Wilde C."/>
            <person name="Balling G."/>
            <person name="Middendorf B."/>
            <person name="Dobrindt U."/>
            <person name="Brzuszkiewicz E."/>
            <person name="Gottschalk G."/>
            <person name="Carniel E."/>
            <person name="Hacker J."/>
        </authorList>
    </citation>
    <scope>NUCLEOTIDE SEQUENCE [LARGE SCALE GENOMIC DNA]</scope>
    <source>
        <strain>536 / UPEC</strain>
    </source>
</reference>
<evidence type="ECO:0000255" key="1">
    <source>
        <dbReference type="HAMAP-Rule" id="MF_00156"/>
    </source>
</evidence>
<protein>
    <recommendedName>
        <fullName evidence="1">3-methyl-2-oxobutanoate hydroxymethyltransferase</fullName>
        <ecNumber evidence="1">2.1.2.11</ecNumber>
    </recommendedName>
    <alternativeName>
        <fullName evidence="1">Ketopantoate hydroxymethyltransferase</fullName>
        <shortName evidence="1">KPHMT</shortName>
    </alternativeName>
</protein>
<proteinExistence type="inferred from homology"/>
<sequence>MKPTTIASLQKCKQDKKRFATITAYDYSFAKLFADEGINVMLVGDSLGMTVQGHDSTLPVTVADIAYHTAAVRRGAPNCLLLADLPFMAYATPEQAFENAATVMRAGANMVKIEGGEWLVETVQMLTERAVPVCGHLGLTPQSVNIFGGYKVQGRGDEAGDRLLSDALALEAAGAQLLVLECVPVELAKRITEALAIPVIGIGAGNVTDGQILVMHDAFGITGGHIPKFAKNFLAETGDIRAAVRQYMAEVESGVYPGEEHSFH</sequence>
<dbReference type="EC" id="2.1.2.11" evidence="1"/>
<dbReference type="EMBL" id="CP000247">
    <property type="protein sequence ID" value="ABG68183.1"/>
    <property type="molecule type" value="Genomic_DNA"/>
</dbReference>
<dbReference type="RefSeq" id="WP_000805441.1">
    <property type="nucleotide sequence ID" value="NC_008253.1"/>
</dbReference>
<dbReference type="SMR" id="Q0TLJ8"/>
<dbReference type="KEGG" id="ecp:ECP_0143"/>
<dbReference type="HOGENOM" id="CLU_036645_1_0_6"/>
<dbReference type="UniPathway" id="UPA00028">
    <property type="reaction ID" value="UER00003"/>
</dbReference>
<dbReference type="Proteomes" id="UP000009182">
    <property type="component" value="Chromosome"/>
</dbReference>
<dbReference type="GO" id="GO:0005737">
    <property type="term" value="C:cytoplasm"/>
    <property type="evidence" value="ECO:0007669"/>
    <property type="project" value="UniProtKB-SubCell"/>
</dbReference>
<dbReference type="GO" id="GO:0003864">
    <property type="term" value="F:3-methyl-2-oxobutanoate hydroxymethyltransferase activity"/>
    <property type="evidence" value="ECO:0007669"/>
    <property type="project" value="UniProtKB-UniRule"/>
</dbReference>
<dbReference type="GO" id="GO:0000287">
    <property type="term" value="F:magnesium ion binding"/>
    <property type="evidence" value="ECO:0007669"/>
    <property type="project" value="TreeGrafter"/>
</dbReference>
<dbReference type="GO" id="GO:0015940">
    <property type="term" value="P:pantothenate biosynthetic process"/>
    <property type="evidence" value="ECO:0007669"/>
    <property type="project" value="UniProtKB-UniRule"/>
</dbReference>
<dbReference type="CDD" id="cd06557">
    <property type="entry name" value="KPHMT-like"/>
    <property type="match status" value="1"/>
</dbReference>
<dbReference type="FunFam" id="3.20.20.60:FF:000003">
    <property type="entry name" value="3-methyl-2-oxobutanoate hydroxymethyltransferase"/>
    <property type="match status" value="1"/>
</dbReference>
<dbReference type="Gene3D" id="3.20.20.60">
    <property type="entry name" value="Phosphoenolpyruvate-binding domains"/>
    <property type="match status" value="1"/>
</dbReference>
<dbReference type="HAMAP" id="MF_00156">
    <property type="entry name" value="PanB"/>
    <property type="match status" value="1"/>
</dbReference>
<dbReference type="InterPro" id="IPR003700">
    <property type="entry name" value="Pantoate_hydroxy_MeTrfase"/>
</dbReference>
<dbReference type="InterPro" id="IPR015813">
    <property type="entry name" value="Pyrv/PenolPyrv_kinase-like_dom"/>
</dbReference>
<dbReference type="InterPro" id="IPR040442">
    <property type="entry name" value="Pyrv_kinase-like_dom_sf"/>
</dbReference>
<dbReference type="NCBIfam" id="TIGR00222">
    <property type="entry name" value="panB"/>
    <property type="match status" value="1"/>
</dbReference>
<dbReference type="NCBIfam" id="NF001452">
    <property type="entry name" value="PRK00311.1"/>
    <property type="match status" value="1"/>
</dbReference>
<dbReference type="PANTHER" id="PTHR20881">
    <property type="entry name" value="3-METHYL-2-OXOBUTANOATE HYDROXYMETHYLTRANSFERASE"/>
    <property type="match status" value="1"/>
</dbReference>
<dbReference type="PANTHER" id="PTHR20881:SF0">
    <property type="entry name" value="3-METHYL-2-OXOBUTANOATE HYDROXYMETHYLTRANSFERASE"/>
    <property type="match status" value="1"/>
</dbReference>
<dbReference type="Pfam" id="PF02548">
    <property type="entry name" value="Pantoate_transf"/>
    <property type="match status" value="1"/>
</dbReference>
<dbReference type="PIRSF" id="PIRSF000388">
    <property type="entry name" value="Pantoate_hydroxy_MeTrfase"/>
    <property type="match status" value="1"/>
</dbReference>
<dbReference type="SUPFAM" id="SSF51621">
    <property type="entry name" value="Phosphoenolpyruvate/pyruvate domain"/>
    <property type="match status" value="1"/>
</dbReference>
<comment type="function">
    <text evidence="1">Catalyzes the reversible reaction in which hydroxymethyl group from 5,10-methylenetetrahydrofolate is transferred onto alpha-ketoisovalerate to form ketopantoate.</text>
</comment>
<comment type="catalytic activity">
    <reaction evidence="1">
        <text>3-methyl-2-oxobutanoate + (6R)-5,10-methylene-5,6,7,8-tetrahydrofolate + H2O = 2-dehydropantoate + (6S)-5,6,7,8-tetrahydrofolate</text>
        <dbReference type="Rhea" id="RHEA:11824"/>
        <dbReference type="ChEBI" id="CHEBI:11561"/>
        <dbReference type="ChEBI" id="CHEBI:11851"/>
        <dbReference type="ChEBI" id="CHEBI:15377"/>
        <dbReference type="ChEBI" id="CHEBI:15636"/>
        <dbReference type="ChEBI" id="CHEBI:57453"/>
        <dbReference type="EC" id="2.1.2.11"/>
    </reaction>
</comment>
<comment type="cofactor">
    <cofactor evidence="1">
        <name>Mg(2+)</name>
        <dbReference type="ChEBI" id="CHEBI:18420"/>
    </cofactor>
    <text evidence="1">Binds 1 Mg(2+) ion per subunit.</text>
</comment>
<comment type="pathway">
    <text evidence="1">Cofactor biosynthesis; (R)-pantothenate biosynthesis; (R)-pantoate from 3-methyl-2-oxobutanoate: step 1/2.</text>
</comment>
<comment type="subunit">
    <text evidence="1">Homodecamer; pentamer of dimers.</text>
</comment>
<comment type="subcellular location">
    <subcellularLocation>
        <location evidence="1">Cytoplasm</location>
    </subcellularLocation>
</comment>
<comment type="similarity">
    <text evidence="1">Belongs to the PanB family.</text>
</comment>
<gene>
    <name evidence="1" type="primary">panB</name>
    <name type="ordered locus">ECP_0143</name>
</gene>
<organism>
    <name type="scientific">Escherichia coli O6:K15:H31 (strain 536 / UPEC)</name>
    <dbReference type="NCBI Taxonomy" id="362663"/>
    <lineage>
        <taxon>Bacteria</taxon>
        <taxon>Pseudomonadati</taxon>
        <taxon>Pseudomonadota</taxon>
        <taxon>Gammaproteobacteria</taxon>
        <taxon>Enterobacterales</taxon>
        <taxon>Enterobacteriaceae</taxon>
        <taxon>Escherichia</taxon>
    </lineage>
</organism>
<feature type="chain" id="PRO_0000297266" description="3-methyl-2-oxobutanoate hydroxymethyltransferase">
    <location>
        <begin position="1"/>
        <end position="264"/>
    </location>
</feature>
<feature type="active site" description="Proton acceptor" evidence="1">
    <location>
        <position position="181"/>
    </location>
</feature>
<feature type="binding site" evidence="1">
    <location>
        <begin position="45"/>
        <end position="46"/>
    </location>
    <ligand>
        <name>3-methyl-2-oxobutanoate</name>
        <dbReference type="ChEBI" id="CHEBI:11851"/>
    </ligand>
</feature>
<feature type="binding site" evidence="1">
    <location>
        <position position="45"/>
    </location>
    <ligand>
        <name>Mg(2+)</name>
        <dbReference type="ChEBI" id="CHEBI:18420"/>
    </ligand>
</feature>
<feature type="binding site" evidence="1">
    <location>
        <position position="84"/>
    </location>
    <ligand>
        <name>3-methyl-2-oxobutanoate</name>
        <dbReference type="ChEBI" id="CHEBI:11851"/>
    </ligand>
</feature>
<feature type="binding site" evidence="1">
    <location>
        <position position="84"/>
    </location>
    <ligand>
        <name>Mg(2+)</name>
        <dbReference type="ChEBI" id="CHEBI:18420"/>
    </ligand>
</feature>
<feature type="binding site" evidence="1">
    <location>
        <position position="112"/>
    </location>
    <ligand>
        <name>3-methyl-2-oxobutanoate</name>
        <dbReference type="ChEBI" id="CHEBI:11851"/>
    </ligand>
</feature>
<feature type="binding site" evidence="1">
    <location>
        <position position="114"/>
    </location>
    <ligand>
        <name>Mg(2+)</name>
        <dbReference type="ChEBI" id="CHEBI:18420"/>
    </ligand>
</feature>
<keyword id="KW-0963">Cytoplasm</keyword>
<keyword id="KW-0460">Magnesium</keyword>
<keyword id="KW-0479">Metal-binding</keyword>
<keyword id="KW-0566">Pantothenate biosynthesis</keyword>
<keyword id="KW-0808">Transferase</keyword>